<keyword id="KW-0028">Amino-acid biosynthesis</keyword>
<keyword id="KW-0963">Cytoplasm</keyword>
<keyword id="KW-0368">Histidine biosynthesis</keyword>
<keyword id="KW-0413">Isomerase</keyword>
<keyword id="KW-1185">Reference proteome</keyword>
<feature type="chain" id="PRO_0000229078" description="1-(5-phosphoribosyl)-5-[(5-phosphoribosylamino)methylideneamino] imidazole-4-carboxamide isomerase">
    <location>
        <begin position="1"/>
        <end position="241"/>
    </location>
</feature>
<feature type="active site" description="Proton acceptor" evidence="1">
    <location>
        <position position="8"/>
    </location>
</feature>
<feature type="active site" description="Proton donor" evidence="1">
    <location>
        <position position="129"/>
    </location>
</feature>
<proteinExistence type="inferred from homology"/>
<dbReference type="EC" id="5.3.1.16" evidence="1"/>
<dbReference type="EMBL" id="CP000230">
    <property type="protein sequence ID" value="ABC24389.1"/>
    <property type="molecule type" value="Genomic_DNA"/>
</dbReference>
<dbReference type="RefSeq" id="WP_011391342.1">
    <property type="nucleotide sequence ID" value="NC_007643.1"/>
</dbReference>
<dbReference type="RefSeq" id="YP_428676.1">
    <property type="nucleotide sequence ID" value="NC_007643.1"/>
</dbReference>
<dbReference type="SMR" id="Q2RNA6"/>
<dbReference type="STRING" id="269796.Rru_A3595"/>
<dbReference type="EnsemblBacteria" id="ABC24389">
    <property type="protein sequence ID" value="ABC24389"/>
    <property type="gene ID" value="Rru_A3595"/>
</dbReference>
<dbReference type="KEGG" id="rru:Rru_A3595"/>
<dbReference type="PATRIC" id="fig|269796.9.peg.3716"/>
<dbReference type="eggNOG" id="COG0106">
    <property type="taxonomic scope" value="Bacteria"/>
</dbReference>
<dbReference type="HOGENOM" id="CLU_048577_1_1_5"/>
<dbReference type="PhylomeDB" id="Q2RNA6"/>
<dbReference type="UniPathway" id="UPA00031">
    <property type="reaction ID" value="UER00009"/>
</dbReference>
<dbReference type="Proteomes" id="UP000001929">
    <property type="component" value="Chromosome"/>
</dbReference>
<dbReference type="GO" id="GO:0005737">
    <property type="term" value="C:cytoplasm"/>
    <property type="evidence" value="ECO:0007669"/>
    <property type="project" value="UniProtKB-SubCell"/>
</dbReference>
<dbReference type="GO" id="GO:0003949">
    <property type="term" value="F:1-(5-phosphoribosyl)-5-[(5-phosphoribosylamino)methylideneamino]imidazole-4-carboxamide isomerase activity"/>
    <property type="evidence" value="ECO:0007669"/>
    <property type="project" value="UniProtKB-UniRule"/>
</dbReference>
<dbReference type="GO" id="GO:0000105">
    <property type="term" value="P:L-histidine biosynthetic process"/>
    <property type="evidence" value="ECO:0007669"/>
    <property type="project" value="UniProtKB-UniRule"/>
</dbReference>
<dbReference type="GO" id="GO:0000162">
    <property type="term" value="P:L-tryptophan biosynthetic process"/>
    <property type="evidence" value="ECO:0007669"/>
    <property type="project" value="TreeGrafter"/>
</dbReference>
<dbReference type="CDD" id="cd04732">
    <property type="entry name" value="HisA"/>
    <property type="match status" value="1"/>
</dbReference>
<dbReference type="FunFam" id="3.20.20.70:FF:000009">
    <property type="entry name" value="1-(5-phosphoribosyl)-5-[(5-phosphoribosylamino)methylideneamino] imidazole-4-carboxamide isomerase"/>
    <property type="match status" value="1"/>
</dbReference>
<dbReference type="Gene3D" id="3.20.20.70">
    <property type="entry name" value="Aldolase class I"/>
    <property type="match status" value="1"/>
</dbReference>
<dbReference type="HAMAP" id="MF_01014">
    <property type="entry name" value="HisA"/>
    <property type="match status" value="1"/>
</dbReference>
<dbReference type="InterPro" id="IPR013785">
    <property type="entry name" value="Aldolase_TIM"/>
</dbReference>
<dbReference type="InterPro" id="IPR006062">
    <property type="entry name" value="His_biosynth"/>
</dbReference>
<dbReference type="InterPro" id="IPR006063">
    <property type="entry name" value="HisA_bact_arch"/>
</dbReference>
<dbReference type="InterPro" id="IPR044524">
    <property type="entry name" value="Isoase_HisA-like"/>
</dbReference>
<dbReference type="InterPro" id="IPR023016">
    <property type="entry name" value="Isoase_HisA-like_bact"/>
</dbReference>
<dbReference type="InterPro" id="IPR011060">
    <property type="entry name" value="RibuloseP-bd_barrel"/>
</dbReference>
<dbReference type="NCBIfam" id="TIGR00007">
    <property type="entry name" value="1-(5-phosphoribosyl)-5-[(5-phosphoribosylamino)methylideneamino]imidazole-4-carboxamide isomerase"/>
    <property type="match status" value="1"/>
</dbReference>
<dbReference type="PANTHER" id="PTHR43090">
    <property type="entry name" value="1-(5-PHOSPHORIBOSYL)-5-[(5-PHOSPHORIBOSYLAMINO)METHYLIDENEAMINO] IMIDAZOLE-4-CARBOXAMIDE ISOMERASE"/>
    <property type="match status" value="1"/>
</dbReference>
<dbReference type="PANTHER" id="PTHR43090:SF2">
    <property type="entry name" value="1-(5-PHOSPHORIBOSYL)-5-[(5-PHOSPHORIBOSYLAMINO)METHYLIDENEAMINO] IMIDAZOLE-4-CARBOXAMIDE ISOMERASE"/>
    <property type="match status" value="1"/>
</dbReference>
<dbReference type="Pfam" id="PF00977">
    <property type="entry name" value="His_biosynth"/>
    <property type="match status" value="1"/>
</dbReference>
<dbReference type="SUPFAM" id="SSF51366">
    <property type="entry name" value="Ribulose-phoshate binding barrel"/>
    <property type="match status" value="1"/>
</dbReference>
<name>HIS4_RHORT</name>
<comment type="catalytic activity">
    <reaction evidence="1">
        <text>1-(5-phospho-beta-D-ribosyl)-5-[(5-phospho-beta-D-ribosylamino)methylideneamino]imidazole-4-carboxamide = 5-[(5-phospho-1-deoxy-D-ribulos-1-ylimino)methylamino]-1-(5-phospho-beta-D-ribosyl)imidazole-4-carboxamide</text>
        <dbReference type="Rhea" id="RHEA:15469"/>
        <dbReference type="ChEBI" id="CHEBI:58435"/>
        <dbReference type="ChEBI" id="CHEBI:58525"/>
        <dbReference type="EC" id="5.3.1.16"/>
    </reaction>
</comment>
<comment type="pathway">
    <text evidence="1">Amino-acid biosynthesis; L-histidine biosynthesis; L-histidine from 5-phospho-alpha-D-ribose 1-diphosphate: step 4/9.</text>
</comment>
<comment type="subcellular location">
    <subcellularLocation>
        <location evidence="1">Cytoplasm</location>
    </subcellularLocation>
</comment>
<comment type="similarity">
    <text evidence="1">Belongs to the HisA/HisF family.</text>
</comment>
<reference key="1">
    <citation type="journal article" date="2011" name="Stand. Genomic Sci.">
        <title>Complete genome sequence of Rhodospirillum rubrum type strain (S1).</title>
        <authorList>
            <person name="Munk A.C."/>
            <person name="Copeland A."/>
            <person name="Lucas S."/>
            <person name="Lapidus A."/>
            <person name="Del Rio T.G."/>
            <person name="Barry K."/>
            <person name="Detter J.C."/>
            <person name="Hammon N."/>
            <person name="Israni S."/>
            <person name="Pitluck S."/>
            <person name="Brettin T."/>
            <person name="Bruce D."/>
            <person name="Han C."/>
            <person name="Tapia R."/>
            <person name="Gilna P."/>
            <person name="Schmutz J."/>
            <person name="Larimer F."/>
            <person name="Land M."/>
            <person name="Kyrpides N.C."/>
            <person name="Mavromatis K."/>
            <person name="Richardson P."/>
            <person name="Rohde M."/>
            <person name="Goeker M."/>
            <person name="Klenk H.P."/>
            <person name="Zhang Y."/>
            <person name="Roberts G.P."/>
            <person name="Reslewic S."/>
            <person name="Schwartz D.C."/>
        </authorList>
    </citation>
    <scope>NUCLEOTIDE SEQUENCE [LARGE SCALE GENOMIC DNA]</scope>
    <source>
        <strain>ATCC 11170 / ATH 1.1.1 / DSM 467 / LMG 4362 / NCIMB 8255 / S1</strain>
    </source>
</reference>
<gene>
    <name evidence="1" type="primary">hisA</name>
    <name type="ordered locus">Rru_A3595</name>
</gene>
<evidence type="ECO:0000255" key="1">
    <source>
        <dbReference type="HAMAP-Rule" id="MF_01014"/>
    </source>
</evidence>
<accession>Q2RNA6</accession>
<organism>
    <name type="scientific">Rhodospirillum rubrum (strain ATCC 11170 / ATH 1.1.1 / DSM 467 / LMG 4362 / NCIMB 8255 / S1)</name>
    <dbReference type="NCBI Taxonomy" id="269796"/>
    <lineage>
        <taxon>Bacteria</taxon>
        <taxon>Pseudomonadati</taxon>
        <taxon>Pseudomonadota</taxon>
        <taxon>Alphaproteobacteria</taxon>
        <taxon>Rhodospirillales</taxon>
        <taxon>Rhodospirillaceae</taxon>
        <taxon>Rhodospirillum</taxon>
    </lineage>
</organism>
<protein>
    <recommendedName>
        <fullName evidence="1">1-(5-phosphoribosyl)-5-[(5-phosphoribosylamino)methylideneamino] imidazole-4-carboxamide isomerase</fullName>
        <ecNumber evidence="1">5.3.1.16</ecNumber>
    </recommendedName>
    <alternativeName>
        <fullName evidence="1">Phosphoribosylformimino-5-aminoimidazole carboxamide ribotide isomerase</fullName>
    </alternativeName>
</protein>
<sequence length="241" mass="25064">MILFPAIDLKDGQCVRLRKGEMDQATVFNDSPADQAAAFALAGCRWIHVVDLNGAFAGRPVNAPAVEAILAAVDLPVQLGGGIRDLAAIDLWLDKGVRRVILGTVALRDPQLVREACKRHPGRIAVGIDARGGMVAVEGWAETSAVSALDLALRFEDAGVAAIVHTDIDRDGLLAGPNLDATAALAERLTTPVIVSGGVASLDDLRAIRARAAAGLEGVISGRALYDGRIDLAEALAVLAD</sequence>